<keyword id="KW-0025">Alternative splicing</keyword>
<keyword id="KW-0175">Coiled coil</keyword>
<keyword id="KW-0256">Endoplasmic reticulum</keyword>
<keyword id="KW-0342">GTP-binding</keyword>
<keyword id="KW-0378">Hydrolase</keyword>
<keyword id="KW-0460">Magnesium</keyword>
<keyword id="KW-0472">Membrane</keyword>
<keyword id="KW-0479">Metal-binding</keyword>
<keyword id="KW-0488">Methylation</keyword>
<keyword id="KW-0547">Nucleotide-binding</keyword>
<keyword id="KW-0597">Phosphoprotein</keyword>
<keyword id="KW-1267">Proteomics identification</keyword>
<keyword id="KW-1185">Reference proteome</keyword>
<keyword id="KW-0812">Transmembrane</keyword>
<keyword id="KW-1133">Transmembrane helix</keyword>
<comment type="function">
    <text evidence="1 5 6 7 9 10">Atlastin-2 (ATL2) is a membrane-anchored GTPase that mediates the GTP-dependent fusion of endoplasmic reticulum (ER) membranes, maintaining the continuous ER network. It facilitates the formation of three-way junctions where ER tubules intersect (PubMed:18270207, PubMed:19665976, PubMed:22065636, PubMed:27619977, PubMed:34817557). Two atlastin-2 on neighboring ER tubules bind GTP and form loose homodimers through the GB1/RHD3-type G domains and 3HB regions. Upon GTP hydrolysis, the 3HB regions tighten, pulling the membranes together to drive their fusion. After fusion, the homodimer disassembles upon release of inorganic phosphate (Pi). Subsequently, GDP dissociates, resetting the monomers to a conformation ready for a new fusion cycle (By similarity).</text>
</comment>
<comment type="catalytic activity">
    <reaction evidence="7">
        <text>GTP + H2O = GDP + phosphate + H(+)</text>
        <dbReference type="Rhea" id="RHEA:19669"/>
        <dbReference type="ChEBI" id="CHEBI:15377"/>
        <dbReference type="ChEBI" id="CHEBI:15378"/>
        <dbReference type="ChEBI" id="CHEBI:37565"/>
        <dbReference type="ChEBI" id="CHEBI:43474"/>
        <dbReference type="ChEBI" id="CHEBI:58189"/>
    </reaction>
    <physiologicalReaction direction="left-to-right" evidence="20">
        <dbReference type="Rhea" id="RHEA:19670"/>
    </physiologicalReaction>
</comment>
<comment type="activity regulation">
    <molecule>Isoform 2</molecule>
    <text evidence="10">With its alternative C-terminus disrupting the autoinhibitory domain, this brain-specific isoform is probably more active at fusing ER membranes.</text>
</comment>
<comment type="subunit">
    <text evidence="6 7 8">Monomeric and homodimeric. The homodimer, transiently formed by two molecules on opposing membranes, is the active form mediating ER membrane fusion (PubMed:22065636). Interacts with REEP5 and RTN3; these proteins are involved in endoplasmic reticulum tubular network organization (PubMed:19665976). Interacts with ZFYVE27; both proteins are involved in endoplasmic reticulum tubular network organization (PubMed:23969831).</text>
</comment>
<comment type="interaction">
    <interactant intactId="EBI-2410430">
        <id>Q8NHH9</id>
    </interactant>
    <interactant intactId="EBI-347088">
        <id>P63104</id>
        <label>YWHAZ</label>
    </interactant>
    <organismsDiffer>false</organismsDiffer>
    <experiments>2</experiments>
</comment>
<comment type="interaction">
    <interactant intactId="EBI-2410430">
        <id>Q8NHH9</id>
    </interactant>
    <interactant intactId="EBI-3892947">
        <id>Q5T4F4</id>
        <label>ZFYVE27</label>
    </interactant>
    <organismsDiffer>false</organismsDiffer>
    <experiments>2</experiments>
</comment>
<comment type="interaction">
    <interactant intactId="EBI-2410430">
        <id>Q8NHH9</id>
    </interactant>
    <interactant intactId="EBI-2410304">
        <id>Q60870</id>
        <label>Reep5</label>
    </interactant>
    <organismsDiffer>true</organismsDiffer>
    <experiments>2</experiments>
</comment>
<comment type="interaction">
    <interactant intactId="EBI-2410430">
        <id>Q8NHH9</id>
    </interactant>
    <interactant intactId="EBI-1487798">
        <id>Q9ES97-3</id>
        <label>Rtn3</label>
    </interactant>
    <organismsDiffer>true</organismsDiffer>
    <experiments>2</experiments>
</comment>
<comment type="subcellular location">
    <subcellularLocation>
        <location evidence="5 7 9">Endoplasmic reticulum membrane</location>
        <topology evidence="5">Multi-pass membrane protein</topology>
    </subcellularLocation>
    <text evidence="9">Localizes at endoplasmic reticulum (ER) three-way tubular junctions (PubMed:27619977).</text>
</comment>
<comment type="alternative products">
    <event type="alternative splicing"/>
    <isoform>
        <id>Q8NHH9-1</id>
        <name>1</name>
        <name evidence="15">AT2b</name>
        <sequence type="displayed"/>
    </isoform>
    <isoform>
        <id>Q8NHH9-2</id>
        <name>2</name>
        <name evidence="15">AT2a</name>
        <sequence type="described" ref="VSP_025310"/>
    </isoform>
    <isoform>
        <id>Q8NHH9-3</id>
        <name>3</name>
        <sequence type="described" ref="VSP_025309"/>
    </isoform>
    <isoform>
        <id>Q8NHH9-4</id>
        <name>4</name>
        <sequence type="described" ref="VSP_041604 VSP_041605"/>
    </isoform>
    <isoform>
        <id>Q8NHH9-5</id>
        <name>5</name>
        <sequence type="described" ref="VSP_041604"/>
    </isoform>
</comment>
<comment type="tissue specificity">
    <text evidence="5">Expressed in peripheral tissues (at protein level).</text>
</comment>
<comment type="domain">
    <text evidence="1">The GB1/RHD3-type G domain mediates GTP-binding and hydrolysis as well as homodimerization.</text>
</comment>
<comment type="domain">
    <text evidence="1">The two three-helix bundle (3HB) regions in the homodimer are loosely associated initially, but they tighten upon GTP hydrolysis, facilitating the fusion of membranes.</text>
</comment>
<comment type="domain">
    <text evidence="10">The C-terminal autoihibitory domain negatively regulates the GTPase-dependent fusogenic activity without affecting GTP-binding.</text>
</comment>
<comment type="similarity">
    <text evidence="3">Belongs to the TRAFAC class dynamin-like GTPase superfamily. GB1/RHD3 GTPase family. GB1 subfamily.</text>
</comment>
<sequence length="583" mass="66229">MAEGDEAARGQQPHQGLWRRRRTSDPSAAVNHVSSTTSLGENYEDDDLVNSDEVMKKPCPVQIVLAHEDDHNFELDEEALEQILLQEHIRDLNIVVVSVAGAFRKGKSFLLDFMLRYMYNKDSQSWIGGNNEPLTGFTWRGGCERETTGIQVWNEVFVIDRPNGTKVAVLLMDTQGAFDSQSTIKDCATVFALSTMTSSVQVYNLSQNIQEDDLQHLQLFTEYGRLAMEEIYQKPFQTLMFLIRDWSYPYEHSYGLEGGKQFLEKRLQVKQNQHEELQNVRKHIHNCFSNLGCFLLPHPGLKVATNPSFDGRLKDIDEDFKRELRNLVPLLLAPENLVEKEISGSKVTCRDLVEYFKAYIKIYQGEELPHPKSMLQATAEANNLAAVAGARDTYCKSMEQVCGGDKPYIAPSDLERKHLDLKEVAIKQFRSVKKMGGDEFCRRYQDQLEAEIEETYANFIKHNDGKNIFYAARTPATLFAVMFAMYIISGLTGFIGLNSIAVLCNLVMGLALIFLCTWAYVKYSGEFREIGTVIDQIAETLWEQVLKPLGDNLMEENIRQSVTNSIKAGLTDQVSHHARLKTD</sequence>
<proteinExistence type="evidence at protein level"/>
<protein>
    <recommendedName>
        <fullName evidence="16">Atlastin-2</fullName>
        <shortName evidence="17">ATL-2</shortName>
        <ecNumber evidence="7">3.6.5.-</ecNumber>
    </recommendedName>
    <alternativeName>
        <fullName evidence="21">ADP-ribosylation factor-like protein 6-interacting protein 2</fullName>
    </alternativeName>
</protein>
<organism>
    <name type="scientific">Homo sapiens</name>
    <name type="common">Human</name>
    <dbReference type="NCBI Taxonomy" id="9606"/>
    <lineage>
        <taxon>Eukaryota</taxon>
        <taxon>Metazoa</taxon>
        <taxon>Chordata</taxon>
        <taxon>Craniata</taxon>
        <taxon>Vertebrata</taxon>
        <taxon>Euteleostomi</taxon>
        <taxon>Mammalia</taxon>
        <taxon>Eutheria</taxon>
        <taxon>Euarchontoglires</taxon>
        <taxon>Primates</taxon>
        <taxon>Haplorrhini</taxon>
        <taxon>Catarrhini</taxon>
        <taxon>Hominidae</taxon>
        <taxon>Homo</taxon>
    </lineage>
</organism>
<gene>
    <name evidence="12 21" type="primary">ATL2</name>
    <name evidence="21" type="synonym">ARL6IP2</name>
</gene>
<reference key="1">
    <citation type="submission" date="2001-11" db="EMBL/GenBank/DDBJ databases">
        <title>Physical/genetic map of the 2p22-2p21 region on chromosome 2.</title>
        <authorList>
            <person name="Gorry M.C."/>
            <person name="Zhang Y."/>
            <person name="Marks J.J."/>
            <person name="Suppe B."/>
            <person name="Hart P.S."/>
            <person name="Cortelli J.R."/>
            <person name="Pallos D."/>
            <person name="Hart T.C."/>
        </authorList>
    </citation>
    <scope>NUCLEOTIDE SEQUENCE [GENOMIC DNA] (ISOFORMS 1 AND 2)</scope>
    <scope>VARIANT ARG-18</scope>
</reference>
<reference key="2">
    <citation type="journal article" date="2004" name="Nat. Genet.">
        <title>Complete sequencing and characterization of 21,243 full-length human cDNAs.</title>
        <authorList>
            <person name="Ota T."/>
            <person name="Suzuki Y."/>
            <person name="Nishikawa T."/>
            <person name="Otsuki T."/>
            <person name="Sugiyama T."/>
            <person name="Irie R."/>
            <person name="Wakamatsu A."/>
            <person name="Hayashi K."/>
            <person name="Sato H."/>
            <person name="Nagai K."/>
            <person name="Kimura K."/>
            <person name="Makita H."/>
            <person name="Sekine M."/>
            <person name="Obayashi M."/>
            <person name="Nishi T."/>
            <person name="Shibahara T."/>
            <person name="Tanaka T."/>
            <person name="Ishii S."/>
            <person name="Yamamoto J."/>
            <person name="Saito K."/>
            <person name="Kawai Y."/>
            <person name="Isono Y."/>
            <person name="Nakamura Y."/>
            <person name="Nagahari K."/>
            <person name="Murakami K."/>
            <person name="Yasuda T."/>
            <person name="Iwayanagi T."/>
            <person name="Wagatsuma M."/>
            <person name="Shiratori A."/>
            <person name="Sudo H."/>
            <person name="Hosoiri T."/>
            <person name="Kaku Y."/>
            <person name="Kodaira H."/>
            <person name="Kondo H."/>
            <person name="Sugawara M."/>
            <person name="Takahashi M."/>
            <person name="Kanda K."/>
            <person name="Yokoi T."/>
            <person name="Furuya T."/>
            <person name="Kikkawa E."/>
            <person name="Omura Y."/>
            <person name="Abe K."/>
            <person name="Kamihara K."/>
            <person name="Katsuta N."/>
            <person name="Sato K."/>
            <person name="Tanikawa M."/>
            <person name="Yamazaki M."/>
            <person name="Ninomiya K."/>
            <person name="Ishibashi T."/>
            <person name="Yamashita H."/>
            <person name="Murakawa K."/>
            <person name="Fujimori K."/>
            <person name="Tanai H."/>
            <person name="Kimata M."/>
            <person name="Watanabe M."/>
            <person name="Hiraoka S."/>
            <person name="Chiba Y."/>
            <person name="Ishida S."/>
            <person name="Ono Y."/>
            <person name="Takiguchi S."/>
            <person name="Watanabe S."/>
            <person name="Yosida M."/>
            <person name="Hotuta T."/>
            <person name="Kusano J."/>
            <person name="Kanehori K."/>
            <person name="Takahashi-Fujii A."/>
            <person name="Hara H."/>
            <person name="Tanase T.-O."/>
            <person name="Nomura Y."/>
            <person name="Togiya S."/>
            <person name="Komai F."/>
            <person name="Hara R."/>
            <person name="Takeuchi K."/>
            <person name="Arita M."/>
            <person name="Imose N."/>
            <person name="Musashino K."/>
            <person name="Yuuki H."/>
            <person name="Oshima A."/>
            <person name="Sasaki N."/>
            <person name="Aotsuka S."/>
            <person name="Yoshikawa Y."/>
            <person name="Matsunawa H."/>
            <person name="Ichihara T."/>
            <person name="Shiohata N."/>
            <person name="Sano S."/>
            <person name="Moriya S."/>
            <person name="Momiyama H."/>
            <person name="Satoh N."/>
            <person name="Takami S."/>
            <person name="Terashima Y."/>
            <person name="Suzuki O."/>
            <person name="Nakagawa S."/>
            <person name="Senoh A."/>
            <person name="Mizoguchi H."/>
            <person name="Goto Y."/>
            <person name="Shimizu F."/>
            <person name="Wakebe H."/>
            <person name="Hishigaki H."/>
            <person name="Watanabe T."/>
            <person name="Sugiyama A."/>
            <person name="Takemoto M."/>
            <person name="Kawakami B."/>
            <person name="Yamazaki M."/>
            <person name="Watanabe K."/>
            <person name="Kumagai A."/>
            <person name="Itakura S."/>
            <person name="Fukuzumi Y."/>
            <person name="Fujimori Y."/>
            <person name="Komiyama M."/>
            <person name="Tashiro H."/>
            <person name="Tanigami A."/>
            <person name="Fujiwara T."/>
            <person name="Ono T."/>
            <person name="Yamada K."/>
            <person name="Fujii Y."/>
            <person name="Ozaki K."/>
            <person name="Hirao M."/>
            <person name="Ohmori Y."/>
            <person name="Kawabata A."/>
            <person name="Hikiji T."/>
            <person name="Kobatake N."/>
            <person name="Inagaki H."/>
            <person name="Ikema Y."/>
            <person name="Okamoto S."/>
            <person name="Okitani R."/>
            <person name="Kawakami T."/>
            <person name="Noguchi S."/>
            <person name="Itoh T."/>
            <person name="Shigeta K."/>
            <person name="Senba T."/>
            <person name="Matsumura K."/>
            <person name="Nakajima Y."/>
            <person name="Mizuno T."/>
            <person name="Morinaga M."/>
            <person name="Sasaki M."/>
            <person name="Togashi T."/>
            <person name="Oyama M."/>
            <person name="Hata H."/>
            <person name="Watanabe M."/>
            <person name="Komatsu T."/>
            <person name="Mizushima-Sugano J."/>
            <person name="Satoh T."/>
            <person name="Shirai Y."/>
            <person name="Takahashi Y."/>
            <person name="Nakagawa K."/>
            <person name="Okumura K."/>
            <person name="Nagase T."/>
            <person name="Nomura N."/>
            <person name="Kikuchi H."/>
            <person name="Masuho Y."/>
            <person name="Yamashita R."/>
            <person name="Nakai K."/>
            <person name="Yada T."/>
            <person name="Nakamura Y."/>
            <person name="Ohara O."/>
            <person name="Isogai T."/>
            <person name="Sugano S."/>
        </authorList>
    </citation>
    <scope>NUCLEOTIDE SEQUENCE [LARGE SCALE MRNA] (ISOFORMS 2; 4 AND 5)</scope>
    <source>
        <tissue>Cerebellum</tissue>
        <tissue>Testis</tissue>
    </source>
</reference>
<reference key="3">
    <citation type="submission" date="2006-07" db="EMBL/GenBank/DDBJ databases">
        <authorList>
            <person name="Suzuki Y."/>
            <person name="Sugano S."/>
            <person name="Totoki Y."/>
            <person name="Toyoda A."/>
            <person name="Takeda T."/>
            <person name="Sakaki Y."/>
            <person name="Tanaka A."/>
            <person name="Yokoyama S."/>
        </authorList>
    </citation>
    <scope>NUCLEOTIDE SEQUENCE [LARGE SCALE MRNA] (ISOFORM 1)</scope>
    <source>
        <tissue>Colon</tissue>
    </source>
</reference>
<reference key="4">
    <citation type="journal article" date="2005" name="Nature">
        <title>Generation and annotation of the DNA sequences of human chromosomes 2 and 4.</title>
        <authorList>
            <person name="Hillier L.W."/>
            <person name="Graves T.A."/>
            <person name="Fulton R.S."/>
            <person name="Fulton L.A."/>
            <person name="Pepin K.H."/>
            <person name="Minx P."/>
            <person name="Wagner-McPherson C."/>
            <person name="Layman D."/>
            <person name="Wylie K."/>
            <person name="Sekhon M."/>
            <person name="Becker M.C."/>
            <person name="Fewell G.A."/>
            <person name="Delehaunty K.D."/>
            <person name="Miner T.L."/>
            <person name="Nash W.E."/>
            <person name="Kremitzki C."/>
            <person name="Oddy L."/>
            <person name="Du H."/>
            <person name="Sun H."/>
            <person name="Bradshaw-Cordum H."/>
            <person name="Ali J."/>
            <person name="Carter J."/>
            <person name="Cordes M."/>
            <person name="Harris A."/>
            <person name="Isak A."/>
            <person name="van Brunt A."/>
            <person name="Nguyen C."/>
            <person name="Du F."/>
            <person name="Courtney L."/>
            <person name="Kalicki J."/>
            <person name="Ozersky P."/>
            <person name="Abbott S."/>
            <person name="Armstrong J."/>
            <person name="Belter E.A."/>
            <person name="Caruso L."/>
            <person name="Cedroni M."/>
            <person name="Cotton M."/>
            <person name="Davidson T."/>
            <person name="Desai A."/>
            <person name="Elliott G."/>
            <person name="Erb T."/>
            <person name="Fronick C."/>
            <person name="Gaige T."/>
            <person name="Haakenson W."/>
            <person name="Haglund K."/>
            <person name="Holmes A."/>
            <person name="Harkins R."/>
            <person name="Kim K."/>
            <person name="Kruchowski S.S."/>
            <person name="Strong C.M."/>
            <person name="Grewal N."/>
            <person name="Goyea E."/>
            <person name="Hou S."/>
            <person name="Levy A."/>
            <person name="Martinka S."/>
            <person name="Mead K."/>
            <person name="McLellan M.D."/>
            <person name="Meyer R."/>
            <person name="Randall-Maher J."/>
            <person name="Tomlinson C."/>
            <person name="Dauphin-Kohlberg S."/>
            <person name="Kozlowicz-Reilly A."/>
            <person name="Shah N."/>
            <person name="Swearengen-Shahid S."/>
            <person name="Snider J."/>
            <person name="Strong J.T."/>
            <person name="Thompson J."/>
            <person name="Yoakum M."/>
            <person name="Leonard S."/>
            <person name="Pearman C."/>
            <person name="Trani L."/>
            <person name="Radionenko M."/>
            <person name="Waligorski J.E."/>
            <person name="Wang C."/>
            <person name="Rock S.M."/>
            <person name="Tin-Wollam A.-M."/>
            <person name="Maupin R."/>
            <person name="Latreille P."/>
            <person name="Wendl M.C."/>
            <person name="Yang S.-P."/>
            <person name="Pohl C."/>
            <person name="Wallis J.W."/>
            <person name="Spieth J."/>
            <person name="Bieri T.A."/>
            <person name="Berkowicz N."/>
            <person name="Nelson J.O."/>
            <person name="Osborne J."/>
            <person name="Ding L."/>
            <person name="Meyer R."/>
            <person name="Sabo A."/>
            <person name="Shotland Y."/>
            <person name="Sinha P."/>
            <person name="Wohldmann P.E."/>
            <person name="Cook L.L."/>
            <person name="Hickenbotham M.T."/>
            <person name="Eldred J."/>
            <person name="Williams D."/>
            <person name="Jones T.A."/>
            <person name="She X."/>
            <person name="Ciccarelli F.D."/>
            <person name="Izaurralde E."/>
            <person name="Taylor J."/>
            <person name="Schmutz J."/>
            <person name="Myers R.M."/>
            <person name="Cox D.R."/>
            <person name="Huang X."/>
            <person name="McPherson J.D."/>
            <person name="Mardis E.R."/>
            <person name="Clifton S.W."/>
            <person name="Warren W.C."/>
            <person name="Chinwalla A.T."/>
            <person name="Eddy S.R."/>
            <person name="Marra M.A."/>
            <person name="Ovcharenko I."/>
            <person name="Furey T.S."/>
            <person name="Miller W."/>
            <person name="Eichler E.E."/>
            <person name="Bork P."/>
            <person name="Suyama M."/>
            <person name="Torrents D."/>
            <person name="Waterston R.H."/>
            <person name="Wilson R.K."/>
        </authorList>
    </citation>
    <scope>NUCLEOTIDE SEQUENCE [LARGE SCALE GENOMIC DNA]</scope>
</reference>
<reference key="5">
    <citation type="journal article" date="2004" name="Genome Res.">
        <title>The status, quality, and expansion of the NIH full-length cDNA project: the Mammalian Gene Collection (MGC).</title>
        <authorList>
            <consortium name="The MGC Project Team"/>
        </authorList>
    </citation>
    <scope>NUCLEOTIDE SEQUENCE [LARGE SCALE MRNA] (ISOFORM 3)</scope>
    <source>
        <tissue>Brain</tissue>
    </source>
</reference>
<reference key="6">
    <citation type="journal article" date="2003" name="J. Biol. Chem.">
        <title>Cellular localization, oligomerization, and membrane association of the hereditary spastic paraplegia 3A (SPG3A) protein atlastin.</title>
        <authorList>
            <person name="Zhu P.-P."/>
            <person name="Patterson A."/>
            <person name="Lavoie B."/>
            <person name="Stadler J."/>
            <person name="Shoeb M."/>
            <person name="Patel R."/>
            <person name="Blackstone C."/>
        </authorList>
    </citation>
    <scope>IDENTIFICATION</scope>
</reference>
<reference key="7">
    <citation type="journal article" date="2008" name="Hum. Mol. Genet.">
        <title>Atlastin GTPases are required for Golgi apparatus and ER morphogenesis.</title>
        <authorList>
            <person name="Rismanchi N."/>
            <person name="Soderblom C."/>
            <person name="Stadler J."/>
            <person name="Zhu P.-P."/>
            <person name="Blackstone C."/>
        </authorList>
    </citation>
    <scope>FUNCTION</scope>
    <scope>TOPOLOGY</scope>
    <scope>SUBCELLULAR LOCATION</scope>
    <scope>MUTAGENESIS OF LYS-107 AND ARG-244</scope>
    <scope>TISSUE SPECIFICITY</scope>
</reference>
<reference key="8">
    <citation type="journal article" date="2008" name="Proc. Natl. Acad. Sci. U.S.A.">
        <title>A quantitative atlas of mitotic phosphorylation.</title>
        <authorList>
            <person name="Dephoure N."/>
            <person name="Zhou C."/>
            <person name="Villen J."/>
            <person name="Beausoleil S.A."/>
            <person name="Bakalarski C.E."/>
            <person name="Elledge S.J."/>
            <person name="Gygi S.P."/>
        </authorList>
    </citation>
    <scope>PHOSPHORYLATION [LARGE SCALE ANALYSIS] AT SER-24</scope>
    <scope>IDENTIFICATION BY MASS SPECTROMETRY [LARGE SCALE ANALYSIS]</scope>
    <source>
        <tissue>Cervix carcinoma</tissue>
    </source>
</reference>
<reference key="9">
    <citation type="journal article" date="2009" name="Cell">
        <title>A class of dynamin-like GTPases involved in the generation of the tubular ER network.</title>
        <authorList>
            <person name="Hu J."/>
            <person name="Shibata Y."/>
            <person name="Zhu P.-P."/>
            <person name="Voss C."/>
            <person name="Rismanchi N."/>
            <person name="Prinz W.A."/>
            <person name="Rapoport T.A."/>
            <person name="Blackstone C."/>
        </authorList>
    </citation>
    <scope>FUNCTION</scope>
    <scope>INTERACTION WITH REEP5 AND RTN3</scope>
</reference>
<reference key="10">
    <citation type="journal article" date="2009" name="Sci. Signal.">
        <title>Quantitative phosphoproteomic analysis of T cell receptor signaling reveals system-wide modulation of protein-protein interactions.</title>
        <authorList>
            <person name="Mayya V."/>
            <person name="Lundgren D.H."/>
            <person name="Hwang S.-I."/>
            <person name="Rezaul K."/>
            <person name="Wu L."/>
            <person name="Eng J.K."/>
            <person name="Rodionov V."/>
            <person name="Han D.K."/>
        </authorList>
    </citation>
    <scope>PHOSPHORYLATION [LARGE SCALE ANALYSIS] AT SER-24</scope>
    <scope>IDENTIFICATION BY MASS SPECTROMETRY [LARGE SCALE ANALYSIS]</scope>
    <source>
        <tissue>Leukemic T-cell</tissue>
    </source>
</reference>
<reference key="11">
    <citation type="journal article" date="2011" name="BMC Syst. Biol.">
        <title>Initial characterization of the human central proteome.</title>
        <authorList>
            <person name="Burkard T.R."/>
            <person name="Planyavsky M."/>
            <person name="Kaupe I."/>
            <person name="Breitwieser F.P."/>
            <person name="Buerckstuemmer T."/>
            <person name="Bennett K.L."/>
            <person name="Superti-Furga G."/>
            <person name="Colinge J."/>
        </authorList>
    </citation>
    <scope>IDENTIFICATION BY MASS SPECTROMETRY [LARGE SCALE ANALYSIS]</scope>
</reference>
<reference key="12">
    <citation type="journal article" date="2011" name="J. Cell Biol.">
        <title>An intramolecular salt bridge drives the soluble domain of GTP-bound atlastin into the postfusion conformation.</title>
        <authorList>
            <person name="Morin-Leisk J."/>
            <person name="Saini S.G."/>
            <person name="Meng X."/>
            <person name="Makhov A.M."/>
            <person name="Zhang P."/>
            <person name="Lee T.H."/>
        </authorList>
    </citation>
    <scope>FUNCTION</scope>
    <scope>CATALYTIC ACTIVITY</scope>
    <scope>SUBUNIT</scope>
    <scope>SUBCELLULAR LOCATION</scope>
    <scope>MUTAGENESIS OF LYS-372; GLU-380; LEU-384; SER-431; MET-435; PHE-440; TYR-444; GLN-447 AND GLU-454</scope>
</reference>
<reference key="13">
    <citation type="journal article" date="2011" name="Sci. Signal.">
        <title>System-wide temporal characterization of the proteome and phosphoproteome of human embryonic stem cell differentiation.</title>
        <authorList>
            <person name="Rigbolt K.T."/>
            <person name="Prokhorova T.A."/>
            <person name="Akimov V."/>
            <person name="Henningsen J."/>
            <person name="Johansen P.T."/>
            <person name="Kratchmarova I."/>
            <person name="Kassem M."/>
            <person name="Mann M."/>
            <person name="Olsen J.V."/>
            <person name="Blagoev B."/>
        </authorList>
    </citation>
    <scope>IDENTIFICATION BY MASS SPECTROMETRY [LARGE SCALE ANALYSIS]</scope>
</reference>
<reference key="14">
    <citation type="journal article" date="2013" name="J. Proteome Res.">
        <title>Toward a comprehensive characterization of a human cancer cell phosphoproteome.</title>
        <authorList>
            <person name="Zhou H."/>
            <person name="Di Palma S."/>
            <person name="Preisinger C."/>
            <person name="Peng M."/>
            <person name="Polat A.N."/>
            <person name="Heck A.J."/>
            <person name="Mohammed S."/>
        </authorList>
    </citation>
    <scope>IDENTIFICATION BY MASS SPECTROMETRY [LARGE SCALE ANALYSIS]</scope>
    <source>
        <tissue>Cervix carcinoma</tissue>
        <tissue>Erythroleukemia</tissue>
    </source>
</reference>
<reference key="15">
    <citation type="journal article" date="2013" name="Proc. Natl. Acad. Sci. U.S.A.">
        <title>Protrudin binds atlastins and endoplasmic reticulum-shaping proteins and regulates network formation.</title>
        <authorList>
            <person name="Chang J."/>
            <person name="Lee S."/>
            <person name="Blackstone C."/>
        </authorList>
    </citation>
    <scope>INTERACTION WITH ZFYVE27</scope>
</reference>
<reference key="16">
    <citation type="journal article" date="2014" name="J. Proteomics">
        <title>An enzyme assisted RP-RPLC approach for in-depth analysis of human liver phosphoproteome.</title>
        <authorList>
            <person name="Bian Y."/>
            <person name="Song C."/>
            <person name="Cheng K."/>
            <person name="Dong M."/>
            <person name="Wang F."/>
            <person name="Huang J."/>
            <person name="Sun D."/>
            <person name="Wang L."/>
            <person name="Ye M."/>
            <person name="Zou H."/>
        </authorList>
    </citation>
    <scope>IDENTIFICATION BY MASS SPECTROMETRY [LARGE SCALE ANALYSIS]</scope>
    <source>
        <tissue>Liver</tissue>
    </source>
</reference>
<reference key="17">
    <citation type="journal article" date="2014" name="Mol. Cell. Proteomics">
        <title>Immunoaffinity enrichment and mass spectrometry analysis of protein methylation.</title>
        <authorList>
            <person name="Guo A."/>
            <person name="Gu H."/>
            <person name="Zhou J."/>
            <person name="Mulhern D."/>
            <person name="Wang Y."/>
            <person name="Lee K.A."/>
            <person name="Yang V."/>
            <person name="Aguiar M."/>
            <person name="Kornhauser J."/>
            <person name="Jia X."/>
            <person name="Ren J."/>
            <person name="Beausoleil S.A."/>
            <person name="Silva J.C."/>
            <person name="Vemulapalli V."/>
            <person name="Bedford M.T."/>
            <person name="Comb M.J."/>
        </authorList>
    </citation>
    <scope>METHYLATION [LARGE SCALE ANALYSIS] AT LYS-270</scope>
    <scope>IDENTIFICATION BY MASS SPECTROMETRY [LARGE SCALE ANALYSIS]</scope>
    <source>
        <tissue>Colon carcinoma</tissue>
    </source>
</reference>
<reference key="18">
    <citation type="journal article" date="2015" name="Proteomics">
        <title>N-terminome analysis of the human mitochondrial proteome.</title>
        <authorList>
            <person name="Vaca Jacome A.S."/>
            <person name="Rabilloud T."/>
            <person name="Schaeffer-Reiss C."/>
            <person name="Rompais M."/>
            <person name="Ayoub D."/>
            <person name="Lane L."/>
            <person name="Bairoch A."/>
            <person name="Van Dorsselaer A."/>
            <person name="Carapito C."/>
        </authorList>
    </citation>
    <scope>IDENTIFICATION BY MASS SPECTROMETRY [LARGE SCALE ANALYSIS]</scope>
</reference>
<reference key="19">
    <citation type="journal article" date="2016" name="Elife">
        <title>Cooperation of the ER-shaping proteins atlastin, lunapark, and reticulons to generate a tubular membrane network.</title>
        <authorList>
            <person name="Wang S."/>
            <person name="Tukachinsky H."/>
            <person name="Romano F.B."/>
            <person name="Rapoport T.A."/>
        </authorList>
    </citation>
    <scope>FUNCTION</scope>
    <scope>SUBCELLULAR LOCATION</scope>
    <scope>MUTAGENESIS OF LYS-107</scope>
</reference>
<reference key="20">
    <citation type="journal article" date="2022" name="J. Cell Biol.">
        <title>Reconstitution of human atlastin fusion activity reveals autoinhibition by the C terminus.</title>
        <authorList>
            <person name="Crosby D."/>
            <person name="Mikolaj M.R."/>
            <person name="Nyenhuis S.B."/>
            <person name="Bryce S."/>
            <person name="Hinshaw J.E."/>
            <person name="Lee T.H."/>
        </authorList>
    </citation>
    <scope>FUNCTION</scope>
    <scope>ACTIVITY REGULATION (ISOFORM 2)</scope>
    <scope>REGION</scope>
    <scope>MUTAGENESIS OF GLU-555; GLU-556 AND ARG-559</scope>
</reference>
<feature type="chain" id="PRO_0000287105" description="Atlastin-2">
    <location>
        <begin position="1"/>
        <end position="583"/>
    </location>
</feature>
<feature type="topological domain" description="Cytoplasmic" evidence="5">
    <location>
        <begin position="1"/>
        <end position="476"/>
    </location>
</feature>
<feature type="transmembrane region" description="Helical" evidence="2">
    <location>
        <begin position="477"/>
        <end position="497"/>
    </location>
</feature>
<feature type="topological domain" description="Lumenal" evidence="19">
    <location>
        <begin position="498"/>
        <end position="499"/>
    </location>
</feature>
<feature type="transmembrane region" description="Helical" evidence="2">
    <location>
        <begin position="500"/>
        <end position="520"/>
    </location>
</feature>
<feature type="topological domain" description="Cytoplasmic" evidence="5">
    <location>
        <begin position="521"/>
        <end position="583"/>
    </location>
</feature>
<feature type="domain" description="GB1/RHD3-type G" evidence="3">
    <location>
        <begin position="91"/>
        <end position="336"/>
    </location>
</feature>
<feature type="region of interest" description="N-terminal hypervariable region (HVR)" evidence="1">
    <location>
        <begin position="1"/>
        <end position="60"/>
    </location>
</feature>
<feature type="region of interest" description="Disordered" evidence="4">
    <location>
        <begin position="1"/>
        <end position="44"/>
    </location>
</feature>
<feature type="region of interest" description="3HB (three-helix bundle) domain" evidence="1">
    <location>
        <begin position="374"/>
        <end position="465"/>
    </location>
</feature>
<feature type="region of interest" description="Linker" evidence="1">
    <location>
        <begin position="466"/>
        <end position="474"/>
    </location>
</feature>
<feature type="region of interest" description="Autoinhibitory domain" evidence="10">
    <location>
        <begin position="547"/>
        <end position="583"/>
    </location>
</feature>
<feature type="coiled-coil region" evidence="2">
    <location>
        <begin position="256"/>
        <end position="284"/>
    </location>
</feature>
<feature type="binding site" evidence="1">
    <location>
        <position position="104"/>
    </location>
    <ligand>
        <name>GDP</name>
        <dbReference type="ChEBI" id="CHEBI:58189"/>
    </ligand>
</feature>
<feature type="binding site" evidence="1">
    <location>
        <position position="104"/>
    </location>
    <ligand>
        <name>GTP</name>
        <dbReference type="ChEBI" id="CHEBI:37565"/>
    </ligand>
</feature>
<feature type="binding site" evidence="1">
    <location>
        <position position="105"/>
    </location>
    <ligand>
        <name>GDP</name>
        <dbReference type="ChEBI" id="CHEBI:58189"/>
    </ligand>
</feature>
<feature type="binding site" evidence="1">
    <location>
        <position position="105"/>
    </location>
    <ligand>
        <name>GTP</name>
        <dbReference type="ChEBI" id="CHEBI:37565"/>
    </ligand>
</feature>
<feature type="binding site" evidence="1">
    <location>
        <position position="106"/>
    </location>
    <ligand>
        <name>GDP</name>
        <dbReference type="ChEBI" id="CHEBI:58189"/>
    </ligand>
</feature>
<feature type="binding site" evidence="1">
    <location>
        <position position="106"/>
    </location>
    <ligand>
        <name>GTP</name>
        <dbReference type="ChEBI" id="CHEBI:37565"/>
    </ligand>
</feature>
<feature type="binding site" evidence="1">
    <location>
        <position position="107"/>
    </location>
    <ligand>
        <name>GDP</name>
        <dbReference type="ChEBI" id="CHEBI:58189"/>
    </ligand>
</feature>
<feature type="binding site" evidence="1">
    <location>
        <position position="107"/>
    </location>
    <ligand>
        <name>GTP</name>
        <dbReference type="ChEBI" id="CHEBI:37565"/>
    </ligand>
</feature>
<feature type="binding site" evidence="1">
    <location>
        <position position="108"/>
    </location>
    <ligand>
        <name>GDP</name>
        <dbReference type="ChEBI" id="CHEBI:58189"/>
    </ligand>
</feature>
<feature type="binding site" evidence="1">
    <location>
        <position position="108"/>
    </location>
    <ligand>
        <name>GTP</name>
        <dbReference type="ChEBI" id="CHEBI:37565"/>
    </ligand>
</feature>
<feature type="binding site" evidence="1">
    <location>
        <position position="108"/>
    </location>
    <ligand>
        <name>Mg(2+)</name>
        <dbReference type="ChEBI" id="CHEBI:18420"/>
    </ligand>
</feature>
<feature type="binding site" evidence="1">
    <location>
        <position position="109"/>
    </location>
    <ligand>
        <name>GDP</name>
        <dbReference type="ChEBI" id="CHEBI:58189"/>
    </ligand>
</feature>
<feature type="binding site" evidence="1">
    <location>
        <position position="109"/>
    </location>
    <ligand>
        <name>GTP</name>
        <dbReference type="ChEBI" id="CHEBI:37565"/>
    </ligand>
</feature>
<feature type="binding site" evidence="1">
    <location>
        <position position="175"/>
    </location>
    <ligand>
        <name>GDP</name>
        <dbReference type="ChEBI" id="CHEBI:58189"/>
    </ligand>
</feature>
<feature type="binding site" evidence="1">
    <location>
        <position position="244"/>
    </location>
    <ligand>
        <name>GDP</name>
        <dbReference type="ChEBI" id="CHEBI:58189"/>
    </ligand>
</feature>
<feature type="binding site" evidence="1">
    <location>
        <position position="244"/>
    </location>
    <ligand>
        <name>GTP</name>
        <dbReference type="ChEBI" id="CHEBI:37565"/>
    </ligand>
</feature>
<feature type="binding site" evidence="1">
    <location>
        <position position="245"/>
    </location>
    <ligand>
        <name>GDP</name>
        <dbReference type="ChEBI" id="CHEBI:58189"/>
    </ligand>
</feature>
<feature type="binding site" evidence="1">
    <location>
        <position position="245"/>
    </location>
    <ligand>
        <name>GTP</name>
        <dbReference type="ChEBI" id="CHEBI:37565"/>
    </ligand>
</feature>
<feature type="binding site" evidence="1">
    <location>
        <position position="303"/>
    </location>
    <ligand>
        <name>GDP</name>
        <dbReference type="ChEBI" id="CHEBI:58189"/>
    </ligand>
</feature>
<feature type="binding site" evidence="1">
    <location>
        <position position="303"/>
    </location>
    <ligand>
        <name>GTP</name>
        <dbReference type="ChEBI" id="CHEBI:37565"/>
    </ligand>
</feature>
<feature type="binding site" evidence="1">
    <location>
        <position position="306"/>
    </location>
    <ligand>
        <name>GDP</name>
        <dbReference type="ChEBI" id="CHEBI:58189"/>
    </ligand>
</feature>
<feature type="modified residue" description="Phosphoserine" evidence="22 23">
    <location>
        <position position="24"/>
    </location>
</feature>
<feature type="modified residue" description="N6-methyllysine" evidence="24">
    <location>
        <position position="270"/>
    </location>
</feature>
<feature type="splice variant" id="VSP_025309" description="In isoform 3." evidence="14">
    <location>
        <begin position="1"/>
        <end position="171"/>
    </location>
</feature>
<feature type="splice variant" id="VSP_041604" description="In isoform 4 and isoform 5." evidence="13">
    <original>MAEGDEAARGQQPHQGLWRRRRTSDPSAAVNHVSSTTSL</original>
    <variation>MVLKKGIKFFQRLINSKSLRF</variation>
    <location>
        <begin position="1"/>
        <end position="39"/>
    </location>
</feature>
<feature type="splice variant" id="VSP_041605" description="In isoform 4." evidence="13">
    <original>VLKPLGDNLMEENIRQSVTNSIKAGLTDQVSHHARLKTD</original>
    <variation>RSPRKVFSKLFEVTRRRMVHRALSSAQRQRLSSNNNKKKN</variation>
    <location>
        <begin position="545"/>
        <end position="583"/>
    </location>
</feature>
<feature type="splice variant" id="VSP_025310" description="In isoform 2." evidence="13">
    <original>LKPLGDNLMEENIRQSVTNSIKAGLTDQVSHHARLKTD</original>
    <variation>FSKLFEVTRRRMVHRALSSAQRQRLSSNNNKKKN</variation>
    <location>
        <begin position="546"/>
        <end position="583"/>
    </location>
</feature>
<feature type="sequence variant" id="VAR_032265" description="In dbSNP:rs3731847." evidence="11">
    <original>W</original>
    <variation>R</variation>
    <location>
        <position position="18"/>
    </location>
</feature>
<feature type="sequence variant" id="VAR_032266" description="In dbSNP:rs34873284.">
    <original>N</original>
    <variation>S</variation>
    <location>
        <position position="272"/>
    </location>
</feature>
<feature type="sequence variant" id="VAR_032267" description="In dbSNP:rs7582826.">
    <original>D</original>
    <variation>H</variation>
    <location>
        <position position="420"/>
    </location>
</feature>
<feature type="mutagenesis site" description="Alters endoplasmic reticulum morphology." evidence="5 9">
    <original>K</original>
    <variation>A</variation>
    <location>
        <position position="107"/>
    </location>
</feature>
<feature type="mutagenesis site" description="Alters endoplasmic reticulum morphogenesis." evidence="5">
    <original>R</original>
    <variation>Q</variation>
    <location>
        <position position="244"/>
    </location>
</feature>
<feature type="mutagenesis site" description="No effect on GTP-binding or GTPase activity. Loss of function in endoplasmic reticulum tubular network membrane organization. No effect on function in endoplasmic reticulum tubular network membrane organization; when associated with R-380." evidence="7">
    <original>K</original>
    <variation>E</variation>
    <location>
        <position position="372"/>
    </location>
</feature>
<feature type="mutagenesis site" description="Loss of function in endoplasmic reticulum tubular network membrane organization." evidence="7">
    <original>E</original>
    <variation>A</variation>
    <location>
        <position position="380"/>
    </location>
</feature>
<feature type="mutagenesis site" description="No effect on GTP-binding or GTPase activity. Loss of function in endoplasmic reticulum tubular network membrane organization. No effect on function in endoplasmic reticulum tubular network membrane organization; when associated with E-372." evidence="7">
    <original>E</original>
    <variation>R</variation>
    <location>
        <position position="380"/>
    </location>
</feature>
<feature type="mutagenesis site" description="Loss of function in endoplasmic reticulum tubular network membrane organization." evidence="7">
    <original>L</original>
    <variation>D</variation>
    <location>
        <position position="384"/>
    </location>
</feature>
<feature type="mutagenesis site" description="No effect on function in endoplasmic reticulum tubular network membrane organization." evidence="7">
    <original>S</original>
    <variation>A</variation>
    <location>
        <position position="431"/>
    </location>
</feature>
<feature type="mutagenesis site" description="Loss of function in endoplasmic reticulum tubular network membrane organization." evidence="7">
    <original>M</original>
    <variation>A</variation>
    <location>
        <position position="435"/>
    </location>
</feature>
<feature type="mutagenesis site" description="Decreased function in endoplasmic reticulum tubular network membrane organization." evidence="7">
    <original>F</original>
    <variation>A</variation>
    <location>
        <position position="440"/>
    </location>
</feature>
<feature type="mutagenesis site" description="No effect on function in endoplasmic reticulum tubular network membrane organization." evidence="7">
    <original>Y</original>
    <variation>A</variation>
    <location>
        <position position="444"/>
    </location>
</feature>
<feature type="mutagenesis site" description="No effect on function in endoplasmic reticulum tubular network membrane organization." evidence="7">
    <original>Q</original>
    <variation>A</variation>
    <location>
        <position position="447"/>
    </location>
</feature>
<feature type="mutagenesis site" description="Loss of function in endoplasmic reticulum tubular network membrane organization." evidence="7">
    <original>E</original>
    <variation>A</variation>
    <location>
        <position position="454"/>
    </location>
</feature>
<feature type="mutagenesis site" description="Increased GTPase-dependent fusogenic activity." evidence="10">
    <original>E</original>
    <variation>K</variation>
    <location>
        <position position="555"/>
    </location>
</feature>
<feature type="mutagenesis site" description="Increased GTPase-dependent fusogenic activity." evidence="10">
    <original>E</original>
    <variation>K</variation>
    <location>
        <position position="556"/>
    </location>
</feature>
<feature type="mutagenesis site" description="Increased GTPase-dependent fusogenic activity." evidence="10">
    <original>R</original>
    <variation>E</variation>
    <location>
        <position position="559"/>
    </location>
</feature>
<feature type="sequence conflict" description="In Ref. 2; BAB15598." evidence="18" ref="2">
    <original>G</original>
    <variation>E</variation>
    <location>
        <position position="509"/>
    </location>
</feature>
<name>ATLA2_HUMAN</name>
<accession>Q8NHH9</accession>
<accession>B7Z1X2</accession>
<accession>B7Z7X8</accession>
<accession>Q4ZG30</accession>
<accession>Q7Z630</accession>
<accession>Q8NHH8</accession>
<accession>Q9H5M7</accession>
<dbReference type="EC" id="3.6.5.-" evidence="7"/>
<dbReference type="EMBL" id="AF449187">
    <property type="protein sequence ID" value="AAM97341.1"/>
    <property type="molecule type" value="Genomic_DNA"/>
</dbReference>
<dbReference type="EMBL" id="AF449176">
    <property type="protein sequence ID" value="AAM97341.1"/>
    <property type="status" value="JOINED"/>
    <property type="molecule type" value="Genomic_DNA"/>
</dbReference>
<dbReference type="EMBL" id="AF449177">
    <property type="protein sequence ID" value="AAM97341.1"/>
    <property type="status" value="JOINED"/>
    <property type="molecule type" value="Genomic_DNA"/>
</dbReference>
<dbReference type="EMBL" id="AF449178">
    <property type="protein sequence ID" value="AAM97341.1"/>
    <property type="status" value="JOINED"/>
    <property type="molecule type" value="Genomic_DNA"/>
</dbReference>
<dbReference type="EMBL" id="AF449179">
    <property type="protein sequence ID" value="AAM97341.1"/>
    <property type="status" value="JOINED"/>
    <property type="molecule type" value="Genomic_DNA"/>
</dbReference>
<dbReference type="EMBL" id="AF449180">
    <property type="protein sequence ID" value="AAM97341.1"/>
    <property type="status" value="JOINED"/>
    <property type="molecule type" value="Genomic_DNA"/>
</dbReference>
<dbReference type="EMBL" id="AF449181">
    <property type="protein sequence ID" value="AAM97341.1"/>
    <property type="status" value="JOINED"/>
    <property type="molecule type" value="Genomic_DNA"/>
</dbReference>
<dbReference type="EMBL" id="AF449182">
    <property type="protein sequence ID" value="AAM97341.1"/>
    <property type="status" value="JOINED"/>
    <property type="molecule type" value="Genomic_DNA"/>
</dbReference>
<dbReference type="EMBL" id="AF449183">
    <property type="protein sequence ID" value="AAM97341.1"/>
    <property type="status" value="JOINED"/>
    <property type="molecule type" value="Genomic_DNA"/>
</dbReference>
<dbReference type="EMBL" id="AF449184">
    <property type="protein sequence ID" value="AAM97341.1"/>
    <property type="status" value="JOINED"/>
    <property type="molecule type" value="Genomic_DNA"/>
</dbReference>
<dbReference type="EMBL" id="AF449185">
    <property type="protein sequence ID" value="AAM97341.1"/>
    <property type="status" value="JOINED"/>
    <property type="molecule type" value="Genomic_DNA"/>
</dbReference>
<dbReference type="EMBL" id="AF449186">
    <property type="protein sequence ID" value="AAM97341.1"/>
    <property type="status" value="JOINED"/>
    <property type="molecule type" value="Genomic_DNA"/>
</dbReference>
<dbReference type="EMBL" id="AF449187">
    <property type="protein sequence ID" value="AAM97342.1"/>
    <property type="molecule type" value="Genomic_DNA"/>
</dbReference>
<dbReference type="EMBL" id="AF449176">
    <property type="protein sequence ID" value="AAM97342.1"/>
    <property type="status" value="JOINED"/>
    <property type="molecule type" value="Genomic_DNA"/>
</dbReference>
<dbReference type="EMBL" id="AF449177">
    <property type="protein sequence ID" value="AAM97342.1"/>
    <property type="status" value="JOINED"/>
    <property type="molecule type" value="Genomic_DNA"/>
</dbReference>
<dbReference type="EMBL" id="AF449178">
    <property type="protein sequence ID" value="AAM97342.1"/>
    <property type="status" value="JOINED"/>
    <property type="molecule type" value="Genomic_DNA"/>
</dbReference>
<dbReference type="EMBL" id="AF449179">
    <property type="protein sequence ID" value="AAM97342.1"/>
    <property type="status" value="JOINED"/>
    <property type="molecule type" value="Genomic_DNA"/>
</dbReference>
<dbReference type="EMBL" id="AF449180">
    <property type="protein sequence ID" value="AAM97342.1"/>
    <property type="status" value="JOINED"/>
    <property type="molecule type" value="Genomic_DNA"/>
</dbReference>
<dbReference type="EMBL" id="AF449181">
    <property type="protein sequence ID" value="AAM97342.1"/>
    <property type="status" value="JOINED"/>
    <property type="molecule type" value="Genomic_DNA"/>
</dbReference>
<dbReference type="EMBL" id="AF449182">
    <property type="protein sequence ID" value="AAM97342.1"/>
    <property type="status" value="JOINED"/>
    <property type="molecule type" value="Genomic_DNA"/>
</dbReference>
<dbReference type="EMBL" id="AF449183">
    <property type="protein sequence ID" value="AAM97342.1"/>
    <property type="status" value="JOINED"/>
    <property type="molecule type" value="Genomic_DNA"/>
</dbReference>
<dbReference type="EMBL" id="AF449184">
    <property type="protein sequence ID" value="AAM97342.1"/>
    <property type="status" value="JOINED"/>
    <property type="molecule type" value="Genomic_DNA"/>
</dbReference>
<dbReference type="EMBL" id="AF449185">
    <property type="protein sequence ID" value="AAM97342.1"/>
    <property type="status" value="JOINED"/>
    <property type="molecule type" value="Genomic_DNA"/>
</dbReference>
<dbReference type="EMBL" id="AF449186">
    <property type="protein sequence ID" value="AAM97342.1"/>
    <property type="status" value="JOINED"/>
    <property type="molecule type" value="Genomic_DNA"/>
</dbReference>
<dbReference type="EMBL" id="AK026946">
    <property type="protein sequence ID" value="BAB15598.1"/>
    <property type="molecule type" value="mRNA"/>
</dbReference>
<dbReference type="EMBL" id="AK294049">
    <property type="protein sequence ID" value="BAH11658.1"/>
    <property type="molecule type" value="mRNA"/>
</dbReference>
<dbReference type="EMBL" id="AK302621">
    <property type="protein sequence ID" value="BAH13764.1"/>
    <property type="molecule type" value="mRNA"/>
</dbReference>
<dbReference type="EMBL" id="AK225190">
    <property type="status" value="NOT_ANNOTATED_CDS"/>
    <property type="molecule type" value="mRNA"/>
</dbReference>
<dbReference type="EMBL" id="AC016995">
    <property type="protein sequence ID" value="AAX88950.1"/>
    <property type="molecule type" value="Genomic_DNA"/>
</dbReference>
<dbReference type="EMBL" id="BC053508">
    <property type="protein sequence ID" value="AAH53508.1"/>
    <property type="molecule type" value="mRNA"/>
</dbReference>
<dbReference type="CCDS" id="CCDS1795.1">
    <molecule id="Q8NHH9-2"/>
</dbReference>
<dbReference type="CCDS" id="CCDS46260.1">
    <molecule id="Q8NHH9-1"/>
</dbReference>
<dbReference type="CCDS" id="CCDS77402.1">
    <molecule id="Q8NHH9-5"/>
</dbReference>
<dbReference type="CCDS" id="CCDS86831.1">
    <molecule id="Q8NHH9-3"/>
</dbReference>
<dbReference type="RefSeq" id="NP_001129145.1">
    <molecule id="Q8NHH9-1"/>
    <property type="nucleotide sequence ID" value="NM_001135673.4"/>
</dbReference>
<dbReference type="RefSeq" id="NP_001295005.1">
    <molecule id="Q8NHH9-5"/>
    <property type="nucleotide sequence ID" value="NM_001308076.1"/>
</dbReference>
<dbReference type="RefSeq" id="NP_001317387.1">
    <molecule id="Q8NHH9-3"/>
    <property type="nucleotide sequence ID" value="NM_001330458.2"/>
</dbReference>
<dbReference type="RefSeq" id="NP_001317388.1">
    <molecule id="Q8NHH9-4"/>
    <property type="nucleotide sequence ID" value="NM_001330459.1"/>
</dbReference>
<dbReference type="RefSeq" id="NP_001317389.1">
    <property type="nucleotide sequence ID" value="NM_001330460.1"/>
</dbReference>
<dbReference type="RefSeq" id="NP_071769.2">
    <molecule id="Q8NHH9-2"/>
    <property type="nucleotide sequence ID" value="NM_022374.5"/>
</dbReference>
<dbReference type="SMR" id="Q8NHH9"/>
<dbReference type="BioGRID" id="122115">
    <property type="interactions" value="115"/>
</dbReference>
<dbReference type="CORUM" id="Q8NHH9"/>
<dbReference type="FunCoup" id="Q8NHH9">
    <property type="interactions" value="2238"/>
</dbReference>
<dbReference type="IntAct" id="Q8NHH9">
    <property type="interactions" value="82"/>
</dbReference>
<dbReference type="MINT" id="Q8NHH9"/>
<dbReference type="STRING" id="9606.ENSP00000368237"/>
<dbReference type="TCDB" id="8.A.109.1.5">
    <property type="family name" value="the endoplasmic reticulum junction-forming protein (lunapark) family"/>
</dbReference>
<dbReference type="GlyCosmos" id="Q8NHH9">
    <property type="glycosylation" value="1 site, 1 glycan"/>
</dbReference>
<dbReference type="GlyGen" id="Q8NHH9">
    <property type="glycosylation" value="1 site, 1 O-linked glycan (1 site)"/>
</dbReference>
<dbReference type="iPTMnet" id="Q8NHH9"/>
<dbReference type="PhosphoSitePlus" id="Q8NHH9"/>
<dbReference type="SwissPalm" id="Q8NHH9"/>
<dbReference type="BioMuta" id="ATL2"/>
<dbReference type="DMDM" id="147742983"/>
<dbReference type="jPOST" id="Q8NHH9"/>
<dbReference type="MassIVE" id="Q8NHH9"/>
<dbReference type="PaxDb" id="9606-ENSP00000368237"/>
<dbReference type="PeptideAtlas" id="Q8NHH9"/>
<dbReference type="ProteomicsDB" id="6903"/>
<dbReference type="ProteomicsDB" id="73710">
    <molecule id="Q8NHH9-1"/>
</dbReference>
<dbReference type="ProteomicsDB" id="73711">
    <molecule id="Q8NHH9-2"/>
</dbReference>
<dbReference type="ProteomicsDB" id="73712">
    <molecule id="Q8NHH9-3"/>
</dbReference>
<dbReference type="ProteomicsDB" id="73713">
    <molecule id="Q8NHH9-4"/>
</dbReference>
<dbReference type="Pumba" id="Q8NHH9"/>
<dbReference type="Antibodypedia" id="29481">
    <property type="antibodies" value="133 antibodies from 25 providers"/>
</dbReference>
<dbReference type="DNASU" id="64225"/>
<dbReference type="Ensembl" id="ENST00000378954.9">
    <molecule id="Q8NHH9-1"/>
    <property type="protein sequence ID" value="ENSP00000368237.4"/>
    <property type="gene ID" value="ENSG00000119787.14"/>
</dbReference>
<dbReference type="Ensembl" id="ENST00000402054.5">
    <molecule id="Q8NHH9-3"/>
    <property type="protein sequence ID" value="ENSP00000384062.1"/>
    <property type="gene ID" value="ENSG00000119787.14"/>
</dbReference>
<dbReference type="Ensembl" id="ENST00000419554.6">
    <molecule id="Q8NHH9-2"/>
    <property type="protein sequence ID" value="ENSP00000415336.2"/>
    <property type="gene ID" value="ENSG00000119787.14"/>
</dbReference>
<dbReference type="Ensembl" id="ENST00000452935.6">
    <molecule id="Q8NHH9-5"/>
    <property type="protein sequence ID" value="ENSP00000390743.2"/>
    <property type="gene ID" value="ENSG00000119787.14"/>
</dbReference>
<dbReference type="Ensembl" id="ENST00000651368.1">
    <molecule id="Q8NHH9-3"/>
    <property type="protein sequence ID" value="ENSP00000498813.1"/>
    <property type="gene ID" value="ENSG00000119787.14"/>
</dbReference>
<dbReference type="GeneID" id="64225"/>
<dbReference type="KEGG" id="hsa:64225"/>
<dbReference type="MANE-Select" id="ENST00000378954.9">
    <property type="protein sequence ID" value="ENSP00000368237.4"/>
    <property type="RefSeq nucleotide sequence ID" value="NM_001135673.4"/>
    <property type="RefSeq protein sequence ID" value="NP_001129145.1"/>
</dbReference>
<dbReference type="UCSC" id="uc002rqq.4">
    <molecule id="Q8NHH9-1"/>
    <property type="organism name" value="human"/>
</dbReference>
<dbReference type="AGR" id="HGNC:24047"/>
<dbReference type="CTD" id="64225"/>
<dbReference type="DisGeNET" id="64225"/>
<dbReference type="GeneCards" id="ATL2"/>
<dbReference type="HGNC" id="HGNC:24047">
    <property type="gene designation" value="ATL2"/>
</dbReference>
<dbReference type="HPA" id="ENSG00000119787">
    <property type="expression patterns" value="Low tissue specificity"/>
</dbReference>
<dbReference type="MIM" id="609368">
    <property type="type" value="gene"/>
</dbReference>
<dbReference type="neXtProt" id="NX_Q8NHH9"/>
<dbReference type="OpenTargets" id="ENSG00000119787"/>
<dbReference type="PharmGKB" id="PA164716322"/>
<dbReference type="VEuPathDB" id="HostDB:ENSG00000119787"/>
<dbReference type="eggNOG" id="KOG2037">
    <property type="taxonomic scope" value="Eukaryota"/>
</dbReference>
<dbReference type="GeneTree" id="ENSGT00940000155710"/>
<dbReference type="HOGENOM" id="CLU_021447_2_1_1"/>
<dbReference type="InParanoid" id="Q8NHH9"/>
<dbReference type="OMA" id="GQVMFKR"/>
<dbReference type="OrthoDB" id="7788754at2759"/>
<dbReference type="PAN-GO" id="Q8NHH9">
    <property type="GO annotations" value="4 GO annotations based on evolutionary models"/>
</dbReference>
<dbReference type="PhylomeDB" id="Q8NHH9"/>
<dbReference type="TreeFam" id="TF105251"/>
<dbReference type="PathwayCommons" id="Q8NHH9"/>
<dbReference type="SignaLink" id="Q8NHH9"/>
<dbReference type="BioGRID-ORCS" id="64225">
    <property type="hits" value="487 hits in 1158 CRISPR screens"/>
</dbReference>
<dbReference type="CD-CODE" id="FB4E32DD">
    <property type="entry name" value="Presynaptic clusters and postsynaptic densities"/>
</dbReference>
<dbReference type="ChiTaRS" id="ATL2">
    <property type="organism name" value="human"/>
</dbReference>
<dbReference type="GenomeRNAi" id="64225"/>
<dbReference type="Pharos" id="Q8NHH9">
    <property type="development level" value="Tbio"/>
</dbReference>
<dbReference type="PRO" id="PR:Q8NHH9"/>
<dbReference type="Proteomes" id="UP000005640">
    <property type="component" value="Chromosome 2"/>
</dbReference>
<dbReference type="RNAct" id="Q8NHH9">
    <property type="molecule type" value="protein"/>
</dbReference>
<dbReference type="Bgee" id="ENSG00000119787">
    <property type="expression patterns" value="Expressed in secondary oocyte and 189 other cell types or tissues"/>
</dbReference>
<dbReference type="ExpressionAtlas" id="Q8NHH9">
    <property type="expression patterns" value="baseline and differential"/>
</dbReference>
<dbReference type="GO" id="GO:0005783">
    <property type="term" value="C:endoplasmic reticulum"/>
    <property type="evidence" value="ECO:0000314"/>
    <property type="project" value="HPA"/>
</dbReference>
<dbReference type="GO" id="GO:0005789">
    <property type="term" value="C:endoplasmic reticulum membrane"/>
    <property type="evidence" value="ECO:0000314"/>
    <property type="project" value="UniProtKB"/>
</dbReference>
<dbReference type="GO" id="GO:0098826">
    <property type="term" value="C:endoplasmic reticulum tubular network membrane"/>
    <property type="evidence" value="ECO:0000314"/>
    <property type="project" value="UniProtKB"/>
</dbReference>
<dbReference type="GO" id="GO:0016020">
    <property type="term" value="C:membrane"/>
    <property type="evidence" value="ECO:0007005"/>
    <property type="project" value="UniProtKB"/>
</dbReference>
<dbReference type="GO" id="GO:0005525">
    <property type="term" value="F:GTP binding"/>
    <property type="evidence" value="ECO:0000318"/>
    <property type="project" value="GO_Central"/>
</dbReference>
<dbReference type="GO" id="GO:0003924">
    <property type="term" value="F:GTPase activity"/>
    <property type="evidence" value="ECO:0000318"/>
    <property type="project" value="GO_Central"/>
</dbReference>
<dbReference type="GO" id="GO:0140523">
    <property type="term" value="F:GTPase-dependent fusogenic activity"/>
    <property type="evidence" value="ECO:0000314"/>
    <property type="project" value="UniProtKB"/>
</dbReference>
<dbReference type="GO" id="GO:0016320">
    <property type="term" value="P:endoplasmic reticulum membrane fusion"/>
    <property type="evidence" value="ECO:0000315"/>
    <property type="project" value="UniProtKB"/>
</dbReference>
<dbReference type="GO" id="GO:0007029">
    <property type="term" value="P:endoplasmic reticulum organization"/>
    <property type="evidence" value="ECO:0000318"/>
    <property type="project" value="GO_Central"/>
</dbReference>
<dbReference type="GO" id="GO:1990809">
    <property type="term" value="P:endoplasmic reticulum tubular network membrane organization"/>
    <property type="evidence" value="ECO:0000315"/>
    <property type="project" value="UniProtKB"/>
</dbReference>
<dbReference type="GO" id="GO:0051260">
    <property type="term" value="P:protein homooligomerization"/>
    <property type="evidence" value="ECO:0000318"/>
    <property type="project" value="GO_Central"/>
</dbReference>
<dbReference type="CDD" id="cd01851">
    <property type="entry name" value="GBP"/>
    <property type="match status" value="1"/>
</dbReference>
<dbReference type="FunFam" id="1.20.58.420:FF:000001">
    <property type="entry name" value="Atlastin-1 isoform 1"/>
    <property type="match status" value="1"/>
</dbReference>
<dbReference type="FunFam" id="3.40.50.300:FF:000314">
    <property type="entry name" value="Atlastin-2 isoform 2"/>
    <property type="match status" value="1"/>
</dbReference>
<dbReference type="Gene3D" id="1.20.58.420">
    <property type="entry name" value="AHSP"/>
    <property type="match status" value="1"/>
</dbReference>
<dbReference type="Gene3D" id="3.40.50.300">
    <property type="entry name" value="P-loop containing nucleotide triphosphate hydrolases"/>
    <property type="match status" value="1"/>
</dbReference>
<dbReference type="InterPro" id="IPR030386">
    <property type="entry name" value="G_GB1_RHD3_dom"/>
</dbReference>
<dbReference type="InterPro" id="IPR003191">
    <property type="entry name" value="Guanylate-bd/ATL_C"/>
</dbReference>
<dbReference type="InterPro" id="IPR036543">
    <property type="entry name" value="Guanylate-bd_C_sf"/>
</dbReference>
<dbReference type="InterPro" id="IPR015894">
    <property type="entry name" value="Guanylate-bd_N"/>
</dbReference>
<dbReference type="InterPro" id="IPR027417">
    <property type="entry name" value="P-loop_NTPase"/>
</dbReference>
<dbReference type="PANTHER" id="PTHR10751">
    <property type="entry name" value="GUANYLATE BINDING PROTEIN"/>
    <property type="match status" value="1"/>
</dbReference>
<dbReference type="Pfam" id="PF02263">
    <property type="entry name" value="GBP"/>
    <property type="match status" value="1"/>
</dbReference>
<dbReference type="Pfam" id="PF02841">
    <property type="entry name" value="GBP_C"/>
    <property type="match status" value="1"/>
</dbReference>
<dbReference type="SUPFAM" id="SSF48340">
    <property type="entry name" value="Interferon-induced guanylate-binding protein 1 (GBP1), C-terminal domain"/>
    <property type="match status" value="1"/>
</dbReference>
<dbReference type="SUPFAM" id="SSF52540">
    <property type="entry name" value="P-loop containing nucleoside triphosphate hydrolases"/>
    <property type="match status" value="1"/>
</dbReference>
<dbReference type="PROSITE" id="PS51715">
    <property type="entry name" value="G_GB1_RHD3"/>
    <property type="match status" value="1"/>
</dbReference>
<evidence type="ECO:0000250" key="1">
    <source>
        <dbReference type="UniProtKB" id="Q8WXF7"/>
    </source>
</evidence>
<evidence type="ECO:0000255" key="2"/>
<evidence type="ECO:0000255" key="3">
    <source>
        <dbReference type="PROSITE-ProRule" id="PRU01052"/>
    </source>
</evidence>
<evidence type="ECO:0000256" key="4">
    <source>
        <dbReference type="SAM" id="MobiDB-lite"/>
    </source>
</evidence>
<evidence type="ECO:0000269" key="5">
    <source>
    </source>
</evidence>
<evidence type="ECO:0000269" key="6">
    <source>
    </source>
</evidence>
<evidence type="ECO:0000269" key="7">
    <source>
    </source>
</evidence>
<evidence type="ECO:0000269" key="8">
    <source>
    </source>
</evidence>
<evidence type="ECO:0000269" key="9">
    <source>
    </source>
</evidence>
<evidence type="ECO:0000269" key="10">
    <source>
    </source>
</evidence>
<evidence type="ECO:0000269" key="11">
    <source ref="1"/>
</evidence>
<evidence type="ECO:0000303" key="12">
    <source>
    </source>
</evidence>
<evidence type="ECO:0000303" key="13">
    <source>
    </source>
</evidence>
<evidence type="ECO:0000303" key="14">
    <source>
    </source>
</evidence>
<evidence type="ECO:0000303" key="15">
    <source>
    </source>
</evidence>
<evidence type="ECO:0000303" key="16">
    <source>
    </source>
</evidence>
<evidence type="ECO:0000303" key="17">
    <source>
    </source>
</evidence>
<evidence type="ECO:0000305" key="18"/>
<evidence type="ECO:0000305" key="19">
    <source>
    </source>
</evidence>
<evidence type="ECO:0000305" key="20">
    <source>
    </source>
</evidence>
<evidence type="ECO:0000312" key="21">
    <source>
        <dbReference type="HGNC" id="HGNC:24047"/>
    </source>
</evidence>
<evidence type="ECO:0007744" key="22">
    <source>
    </source>
</evidence>
<evidence type="ECO:0007744" key="23">
    <source>
    </source>
</evidence>
<evidence type="ECO:0007744" key="24">
    <source>
    </source>
</evidence>